<comment type="function">
    <text evidence="1">Catalyzes the methylthiolation of an aspartic acid residue of ribosomal protein uS12.</text>
</comment>
<comment type="catalytic activity">
    <reaction evidence="1">
        <text>L-aspartate(89)-[ribosomal protein uS12]-hydrogen + (sulfur carrier)-SH + AH2 + 2 S-adenosyl-L-methionine = 3-methylsulfanyl-L-aspartate(89)-[ribosomal protein uS12]-hydrogen + (sulfur carrier)-H + 5'-deoxyadenosine + L-methionine + A + S-adenosyl-L-homocysteine + 2 H(+)</text>
        <dbReference type="Rhea" id="RHEA:37087"/>
        <dbReference type="Rhea" id="RHEA-COMP:10460"/>
        <dbReference type="Rhea" id="RHEA-COMP:10461"/>
        <dbReference type="Rhea" id="RHEA-COMP:14737"/>
        <dbReference type="Rhea" id="RHEA-COMP:14739"/>
        <dbReference type="ChEBI" id="CHEBI:13193"/>
        <dbReference type="ChEBI" id="CHEBI:15378"/>
        <dbReference type="ChEBI" id="CHEBI:17319"/>
        <dbReference type="ChEBI" id="CHEBI:17499"/>
        <dbReference type="ChEBI" id="CHEBI:29917"/>
        <dbReference type="ChEBI" id="CHEBI:29961"/>
        <dbReference type="ChEBI" id="CHEBI:57844"/>
        <dbReference type="ChEBI" id="CHEBI:57856"/>
        <dbReference type="ChEBI" id="CHEBI:59789"/>
        <dbReference type="ChEBI" id="CHEBI:64428"/>
        <dbReference type="ChEBI" id="CHEBI:73599"/>
        <dbReference type="EC" id="2.8.4.4"/>
    </reaction>
</comment>
<comment type="cofactor">
    <cofactor evidence="1">
        <name>[4Fe-4S] cluster</name>
        <dbReference type="ChEBI" id="CHEBI:49883"/>
    </cofactor>
    <text evidence="1">Binds 2 [4Fe-4S] clusters. One cluster is coordinated with 3 cysteines and an exchangeable S-adenosyl-L-methionine.</text>
</comment>
<comment type="subcellular location">
    <subcellularLocation>
        <location evidence="1">Cytoplasm</location>
    </subcellularLocation>
</comment>
<comment type="similarity">
    <text evidence="1">Belongs to the methylthiotransferase family. RimO subfamily.</text>
</comment>
<accession>Q7NYA1</accession>
<reference key="1">
    <citation type="journal article" date="2003" name="Proc. Natl. Acad. Sci. U.S.A.">
        <title>The complete genome sequence of Chromobacterium violaceum reveals remarkable and exploitable bacterial adaptability.</title>
        <authorList>
            <person name="Vasconcelos A.T.R."/>
            <person name="de Almeida D.F."/>
            <person name="Hungria M."/>
            <person name="Guimaraes C.T."/>
            <person name="Antonio R.V."/>
            <person name="Almeida F.C."/>
            <person name="de Almeida L.G.P."/>
            <person name="de Almeida R."/>
            <person name="Alves-Gomes J.A."/>
            <person name="Andrade E.M."/>
            <person name="Araripe J."/>
            <person name="de Araujo M.F.F."/>
            <person name="Astolfi-Filho S."/>
            <person name="Azevedo V."/>
            <person name="Baptista A.J."/>
            <person name="Bataus L.A.M."/>
            <person name="Batista J.S."/>
            <person name="Belo A."/>
            <person name="van den Berg C."/>
            <person name="Bogo M."/>
            <person name="Bonatto S."/>
            <person name="Bordignon J."/>
            <person name="Brigido M.M."/>
            <person name="Brito C.A."/>
            <person name="Brocchi M."/>
            <person name="Burity H.A."/>
            <person name="Camargo A.A."/>
            <person name="Cardoso D.D.P."/>
            <person name="Carneiro N.P."/>
            <person name="Carraro D.M."/>
            <person name="Carvalho C.M.B."/>
            <person name="Cascardo J.C.M."/>
            <person name="Cavada B.S."/>
            <person name="Chueire L.M.O."/>
            <person name="Creczynski-Pasa T.B."/>
            <person name="Cunha-Junior N.C."/>
            <person name="Fagundes N."/>
            <person name="Falcao C.L."/>
            <person name="Fantinatti F."/>
            <person name="Farias I.P."/>
            <person name="Felipe M.S.S."/>
            <person name="Ferrari L.P."/>
            <person name="Ferro J.A."/>
            <person name="Ferro M.I.T."/>
            <person name="Franco G.R."/>
            <person name="Freitas N.S.A."/>
            <person name="Furlan L.R."/>
            <person name="Gazzinelli R.T."/>
            <person name="Gomes E.A."/>
            <person name="Goncalves P.R."/>
            <person name="Grangeiro T.B."/>
            <person name="Grattapaglia D."/>
            <person name="Grisard E.C."/>
            <person name="Hanna E.S."/>
            <person name="Jardim S.N."/>
            <person name="Laurino J."/>
            <person name="Leoi L.C.T."/>
            <person name="Lima L.F.A."/>
            <person name="Loureiro M.F."/>
            <person name="Lyra M.C.C.P."/>
            <person name="Madeira H.M.F."/>
            <person name="Manfio G.P."/>
            <person name="Maranhao A.Q."/>
            <person name="Martins W.S."/>
            <person name="di Mauro S.M.Z."/>
            <person name="de Medeiros S.R.B."/>
            <person name="Meissner R.V."/>
            <person name="Moreira M.A.M."/>
            <person name="Nascimento F.F."/>
            <person name="Nicolas M.F."/>
            <person name="Oliveira J.G."/>
            <person name="Oliveira S.C."/>
            <person name="Paixao R.F.C."/>
            <person name="Parente J.A."/>
            <person name="Pedrosa F.O."/>
            <person name="Pena S.D.J."/>
            <person name="Pereira J.O."/>
            <person name="Pereira M."/>
            <person name="Pinto L.S.R.C."/>
            <person name="Pinto L.S."/>
            <person name="Porto J.I.R."/>
            <person name="Potrich D.P."/>
            <person name="Ramalho-Neto C.E."/>
            <person name="Reis A.M.M."/>
            <person name="Rigo L.U."/>
            <person name="Rondinelli E."/>
            <person name="Santos E.B.P."/>
            <person name="Santos F.R."/>
            <person name="Schneider M.P.C."/>
            <person name="Seuanez H.N."/>
            <person name="Silva A.M.R."/>
            <person name="da Silva A.L.C."/>
            <person name="Silva D.W."/>
            <person name="Silva R."/>
            <person name="Simoes I.C."/>
            <person name="Simon D."/>
            <person name="Soares C.M.A."/>
            <person name="Soares R.B.A."/>
            <person name="Souza E.M."/>
            <person name="Souza K.R.L."/>
            <person name="Souza R.C."/>
            <person name="Steffens M.B.R."/>
            <person name="Steindel M."/>
            <person name="Teixeira S.R."/>
            <person name="Urmenyi T."/>
            <person name="Vettore A."/>
            <person name="Wassem R."/>
            <person name="Zaha A."/>
            <person name="Simpson A.J.G."/>
        </authorList>
    </citation>
    <scope>NUCLEOTIDE SEQUENCE [LARGE SCALE GENOMIC DNA]</scope>
    <source>
        <strain>ATCC 12472 / DSM 30191 / JCM 1249 / CCUG 213 / NBRC 12614 / NCIMB 9131 / NCTC 9757 / MK</strain>
    </source>
</reference>
<evidence type="ECO:0000255" key="1">
    <source>
        <dbReference type="HAMAP-Rule" id="MF_01865"/>
    </source>
</evidence>
<evidence type="ECO:0000255" key="2">
    <source>
        <dbReference type="PROSITE-ProRule" id="PRU01266"/>
    </source>
</evidence>
<gene>
    <name evidence="1" type="primary">rimO</name>
    <name type="ordered locus">CV_1373</name>
</gene>
<keyword id="KW-0004">4Fe-4S</keyword>
<keyword id="KW-0963">Cytoplasm</keyword>
<keyword id="KW-0408">Iron</keyword>
<keyword id="KW-0411">Iron-sulfur</keyword>
<keyword id="KW-0479">Metal-binding</keyword>
<keyword id="KW-1185">Reference proteome</keyword>
<keyword id="KW-0949">S-adenosyl-L-methionine</keyword>
<keyword id="KW-0808">Transferase</keyword>
<protein>
    <recommendedName>
        <fullName evidence="1">Ribosomal protein uS12 methylthiotransferase RimO</fullName>
        <shortName evidence="1">uS12 MTTase</shortName>
        <shortName evidence="1">uS12 methylthiotransferase</shortName>
        <ecNumber evidence="1">2.8.4.4</ecNumber>
    </recommendedName>
    <alternativeName>
        <fullName evidence="1">Ribosomal protein uS12 (aspartate-C(3))-methylthiotransferase</fullName>
    </alternativeName>
    <alternativeName>
        <fullName evidence="1">Ribosome maturation factor RimO</fullName>
    </alternativeName>
</protein>
<proteinExistence type="inferred from homology"/>
<sequence length="438" mass="48761">MNKTPRVGFVSLGCPKAASDSEQILTRLRAEGYEIAPSYDGADLVVVNTCGFIDSAVEESLDAIGEALNENGKVIVTGCLGAKGDVVRDVHPSVLAVTGPHATEEVMSAVHTHLPKPHDPFVDLVPDIGVRLTPKHYAYLKISEGCNHRCTFCIIPSMRGDLESRPIHDVLREAESLAKAGVKEILVISQDTSAYGVDTKYKLGFHNGRPVKTRMTELCEELGRHGIWVRLHYVYPYPHVDEVIPLMRDGKILPYLDIPFQHASQKVLKLMKRPANSDNVLARIKKWREICPELVIRSTFIVGFPGETEEDFEELLAFIREAELDRVGCFTYSPVEGATANELPNPVPEDVKEARKERFMAVQAEISARRLERRVGQTLQVLVDEIDDEGTAVCRSYADAPEIDGLVFVEDAAGMQPGEFYQVEIVDCSEHDLWGERR</sequence>
<dbReference type="EC" id="2.8.4.4" evidence="1"/>
<dbReference type="EMBL" id="AE016825">
    <property type="protein sequence ID" value="AAQ59048.1"/>
    <property type="molecule type" value="Genomic_DNA"/>
</dbReference>
<dbReference type="RefSeq" id="WP_011134927.1">
    <property type="nucleotide sequence ID" value="NC_005085.1"/>
</dbReference>
<dbReference type="SMR" id="Q7NYA1"/>
<dbReference type="STRING" id="243365.CV_1373"/>
<dbReference type="GeneID" id="66367059"/>
<dbReference type="KEGG" id="cvi:CV_1373"/>
<dbReference type="eggNOG" id="COG0621">
    <property type="taxonomic scope" value="Bacteria"/>
</dbReference>
<dbReference type="HOGENOM" id="CLU_018697_0_0_4"/>
<dbReference type="OrthoDB" id="9805215at2"/>
<dbReference type="Proteomes" id="UP000001424">
    <property type="component" value="Chromosome"/>
</dbReference>
<dbReference type="GO" id="GO:0005829">
    <property type="term" value="C:cytosol"/>
    <property type="evidence" value="ECO:0007669"/>
    <property type="project" value="TreeGrafter"/>
</dbReference>
<dbReference type="GO" id="GO:0051539">
    <property type="term" value="F:4 iron, 4 sulfur cluster binding"/>
    <property type="evidence" value="ECO:0007669"/>
    <property type="project" value="UniProtKB-UniRule"/>
</dbReference>
<dbReference type="GO" id="GO:0035599">
    <property type="term" value="F:aspartic acid methylthiotransferase activity"/>
    <property type="evidence" value="ECO:0007669"/>
    <property type="project" value="TreeGrafter"/>
</dbReference>
<dbReference type="GO" id="GO:0046872">
    <property type="term" value="F:metal ion binding"/>
    <property type="evidence" value="ECO:0007669"/>
    <property type="project" value="UniProtKB-KW"/>
</dbReference>
<dbReference type="GO" id="GO:0103039">
    <property type="term" value="F:protein methylthiotransferase activity"/>
    <property type="evidence" value="ECO:0007669"/>
    <property type="project" value="UniProtKB-EC"/>
</dbReference>
<dbReference type="GO" id="GO:0006400">
    <property type="term" value="P:tRNA modification"/>
    <property type="evidence" value="ECO:0007669"/>
    <property type="project" value="InterPro"/>
</dbReference>
<dbReference type="CDD" id="cd01335">
    <property type="entry name" value="Radical_SAM"/>
    <property type="match status" value="1"/>
</dbReference>
<dbReference type="FunFam" id="3.40.50.12160:FF:000002">
    <property type="entry name" value="Ribosomal protein S12 methylthiotransferase RimO"/>
    <property type="match status" value="1"/>
</dbReference>
<dbReference type="FunFam" id="3.80.30.20:FF:000001">
    <property type="entry name" value="tRNA-2-methylthio-N(6)-dimethylallyladenosine synthase 2"/>
    <property type="match status" value="1"/>
</dbReference>
<dbReference type="Gene3D" id="3.40.50.12160">
    <property type="entry name" value="Methylthiotransferase, N-terminal domain"/>
    <property type="match status" value="1"/>
</dbReference>
<dbReference type="Gene3D" id="2.40.50.140">
    <property type="entry name" value="Nucleic acid-binding proteins"/>
    <property type="match status" value="1"/>
</dbReference>
<dbReference type="Gene3D" id="3.80.30.20">
    <property type="entry name" value="tm_1862 like domain"/>
    <property type="match status" value="1"/>
</dbReference>
<dbReference type="HAMAP" id="MF_01865">
    <property type="entry name" value="MTTase_RimO"/>
    <property type="match status" value="1"/>
</dbReference>
<dbReference type="InterPro" id="IPR006638">
    <property type="entry name" value="Elp3/MiaA/NifB-like_rSAM"/>
</dbReference>
<dbReference type="InterPro" id="IPR005839">
    <property type="entry name" value="Methylthiotransferase"/>
</dbReference>
<dbReference type="InterPro" id="IPR020612">
    <property type="entry name" value="Methylthiotransferase_CS"/>
</dbReference>
<dbReference type="InterPro" id="IPR013848">
    <property type="entry name" value="Methylthiotransferase_N"/>
</dbReference>
<dbReference type="InterPro" id="IPR038135">
    <property type="entry name" value="Methylthiotransferase_N_sf"/>
</dbReference>
<dbReference type="InterPro" id="IPR012340">
    <property type="entry name" value="NA-bd_OB-fold"/>
</dbReference>
<dbReference type="InterPro" id="IPR005840">
    <property type="entry name" value="Ribosomal_uS12_MeSTrfase_RimO"/>
</dbReference>
<dbReference type="InterPro" id="IPR007197">
    <property type="entry name" value="rSAM"/>
</dbReference>
<dbReference type="InterPro" id="IPR023404">
    <property type="entry name" value="rSAM_horseshoe"/>
</dbReference>
<dbReference type="InterPro" id="IPR002792">
    <property type="entry name" value="TRAM_dom"/>
</dbReference>
<dbReference type="NCBIfam" id="TIGR01125">
    <property type="entry name" value="30S ribosomal protein S12 methylthiotransferase RimO"/>
    <property type="match status" value="1"/>
</dbReference>
<dbReference type="NCBIfam" id="TIGR00089">
    <property type="entry name" value="MiaB/RimO family radical SAM methylthiotransferase"/>
    <property type="match status" value="1"/>
</dbReference>
<dbReference type="PANTHER" id="PTHR43837">
    <property type="entry name" value="RIBOSOMAL PROTEIN S12 METHYLTHIOTRANSFERASE RIMO"/>
    <property type="match status" value="1"/>
</dbReference>
<dbReference type="PANTHER" id="PTHR43837:SF1">
    <property type="entry name" value="RIBOSOMAL PROTEIN US12 METHYLTHIOTRANSFERASE RIMO"/>
    <property type="match status" value="1"/>
</dbReference>
<dbReference type="Pfam" id="PF04055">
    <property type="entry name" value="Radical_SAM"/>
    <property type="match status" value="1"/>
</dbReference>
<dbReference type="Pfam" id="PF18693">
    <property type="entry name" value="TRAM_2"/>
    <property type="match status" value="1"/>
</dbReference>
<dbReference type="Pfam" id="PF00919">
    <property type="entry name" value="UPF0004"/>
    <property type="match status" value="1"/>
</dbReference>
<dbReference type="SFLD" id="SFLDG01082">
    <property type="entry name" value="B12-binding_domain_containing"/>
    <property type="match status" value="1"/>
</dbReference>
<dbReference type="SFLD" id="SFLDG01061">
    <property type="entry name" value="methylthiotransferase"/>
    <property type="match status" value="1"/>
</dbReference>
<dbReference type="SFLD" id="SFLDF00274">
    <property type="entry name" value="ribosomal_protein_S12_methylth"/>
    <property type="match status" value="1"/>
</dbReference>
<dbReference type="SMART" id="SM00729">
    <property type="entry name" value="Elp3"/>
    <property type="match status" value="1"/>
</dbReference>
<dbReference type="SUPFAM" id="SSF102114">
    <property type="entry name" value="Radical SAM enzymes"/>
    <property type="match status" value="1"/>
</dbReference>
<dbReference type="PROSITE" id="PS51449">
    <property type="entry name" value="MTTASE_N"/>
    <property type="match status" value="1"/>
</dbReference>
<dbReference type="PROSITE" id="PS01278">
    <property type="entry name" value="MTTASE_RADICAL"/>
    <property type="match status" value="1"/>
</dbReference>
<dbReference type="PROSITE" id="PS51918">
    <property type="entry name" value="RADICAL_SAM"/>
    <property type="match status" value="1"/>
</dbReference>
<dbReference type="PROSITE" id="PS50926">
    <property type="entry name" value="TRAM"/>
    <property type="match status" value="1"/>
</dbReference>
<organism>
    <name type="scientific">Chromobacterium violaceum (strain ATCC 12472 / DSM 30191 / JCM 1249 / CCUG 213 / NBRC 12614 / NCIMB 9131 / NCTC 9757 / MK)</name>
    <dbReference type="NCBI Taxonomy" id="243365"/>
    <lineage>
        <taxon>Bacteria</taxon>
        <taxon>Pseudomonadati</taxon>
        <taxon>Pseudomonadota</taxon>
        <taxon>Betaproteobacteria</taxon>
        <taxon>Neisseriales</taxon>
        <taxon>Chromobacteriaceae</taxon>
        <taxon>Chromobacterium</taxon>
    </lineage>
</organism>
<name>RIMO_CHRVO</name>
<feature type="chain" id="PRO_0000374772" description="Ribosomal protein uS12 methylthiotransferase RimO">
    <location>
        <begin position="1"/>
        <end position="438"/>
    </location>
</feature>
<feature type="domain" description="MTTase N-terminal" evidence="1">
    <location>
        <begin position="5"/>
        <end position="115"/>
    </location>
</feature>
<feature type="domain" description="Radical SAM core" evidence="2">
    <location>
        <begin position="132"/>
        <end position="369"/>
    </location>
</feature>
<feature type="domain" description="TRAM" evidence="1">
    <location>
        <begin position="372"/>
        <end position="438"/>
    </location>
</feature>
<feature type="binding site" evidence="1">
    <location>
        <position position="14"/>
    </location>
    <ligand>
        <name>[4Fe-4S] cluster</name>
        <dbReference type="ChEBI" id="CHEBI:49883"/>
        <label>1</label>
    </ligand>
</feature>
<feature type="binding site" evidence="1">
    <location>
        <position position="50"/>
    </location>
    <ligand>
        <name>[4Fe-4S] cluster</name>
        <dbReference type="ChEBI" id="CHEBI:49883"/>
        <label>1</label>
    </ligand>
</feature>
<feature type="binding site" evidence="1">
    <location>
        <position position="79"/>
    </location>
    <ligand>
        <name>[4Fe-4S] cluster</name>
        <dbReference type="ChEBI" id="CHEBI:49883"/>
        <label>1</label>
    </ligand>
</feature>
<feature type="binding site" evidence="1">
    <location>
        <position position="146"/>
    </location>
    <ligand>
        <name>[4Fe-4S] cluster</name>
        <dbReference type="ChEBI" id="CHEBI:49883"/>
        <label>2</label>
        <note>4Fe-4S-S-AdoMet</note>
    </ligand>
</feature>
<feature type="binding site" evidence="1">
    <location>
        <position position="150"/>
    </location>
    <ligand>
        <name>[4Fe-4S] cluster</name>
        <dbReference type="ChEBI" id="CHEBI:49883"/>
        <label>2</label>
        <note>4Fe-4S-S-AdoMet</note>
    </ligand>
</feature>
<feature type="binding site" evidence="1">
    <location>
        <position position="153"/>
    </location>
    <ligand>
        <name>[4Fe-4S] cluster</name>
        <dbReference type="ChEBI" id="CHEBI:49883"/>
        <label>2</label>
        <note>4Fe-4S-S-AdoMet</note>
    </ligand>
</feature>